<protein>
    <recommendedName>
        <fullName evidence="1">DNA-directed RNA polymerase subunit beta'</fullName>
        <ecNumber evidence="1">2.7.7.6</ecNumber>
    </recommendedName>
    <alternativeName>
        <fullName evidence="1">PEP</fullName>
    </alternativeName>
    <alternativeName>
        <fullName evidence="1">Plastid-encoded RNA polymerase subunit beta'</fullName>
        <shortName evidence="1">RNA polymerase subunit beta'</shortName>
    </alternativeName>
</protein>
<gene>
    <name evidence="1" type="primary">rpoC1</name>
</gene>
<geneLocation type="chloroplast"/>
<reference key="1">
    <citation type="journal article" date="2007" name="Mol. Phylogenet. Evol.">
        <title>Phylogenetic and evolutionary implications of complete chloroplast genome sequences of four early-diverging angiosperms: Buxus (Buxaceae), Chloranthus (Chloranthaceae), Dioscorea (Dioscoreaceae), and Illicium (Schisandraceae).</title>
        <authorList>
            <person name="Hansen D.R."/>
            <person name="Dastidar S.G."/>
            <person name="Cai Z."/>
            <person name="Penaflor C."/>
            <person name="Kuehl J.V."/>
            <person name="Boore J.L."/>
            <person name="Jansen R.K."/>
        </authorList>
    </citation>
    <scope>NUCLEOTIDE SEQUENCE [LARGE SCALE GENOMIC DNA]</scope>
</reference>
<evidence type="ECO:0000255" key="1">
    <source>
        <dbReference type="HAMAP-Rule" id="MF_01323"/>
    </source>
</evidence>
<accession>A6MMT5</accession>
<keyword id="KW-0150">Chloroplast</keyword>
<keyword id="KW-0240">DNA-directed RNA polymerase</keyword>
<keyword id="KW-0460">Magnesium</keyword>
<keyword id="KW-0479">Metal-binding</keyword>
<keyword id="KW-0548">Nucleotidyltransferase</keyword>
<keyword id="KW-0934">Plastid</keyword>
<keyword id="KW-0804">Transcription</keyword>
<keyword id="KW-0808">Transferase</keyword>
<keyword id="KW-0862">Zinc</keyword>
<dbReference type="EC" id="2.7.7.6" evidence="1"/>
<dbReference type="EMBL" id="EF380354">
    <property type="protein sequence ID" value="ABQ52510.1"/>
    <property type="molecule type" value="Genomic_DNA"/>
</dbReference>
<dbReference type="RefSeq" id="YP_001294261.1">
    <property type="nucleotide sequence ID" value="NC_009600.1"/>
</dbReference>
<dbReference type="SMR" id="A6MMT5"/>
<dbReference type="GeneID" id="5236810"/>
<dbReference type="GO" id="GO:0009507">
    <property type="term" value="C:chloroplast"/>
    <property type="evidence" value="ECO:0007669"/>
    <property type="project" value="UniProtKB-SubCell"/>
</dbReference>
<dbReference type="GO" id="GO:0000428">
    <property type="term" value="C:DNA-directed RNA polymerase complex"/>
    <property type="evidence" value="ECO:0007669"/>
    <property type="project" value="UniProtKB-KW"/>
</dbReference>
<dbReference type="GO" id="GO:0005739">
    <property type="term" value="C:mitochondrion"/>
    <property type="evidence" value="ECO:0007669"/>
    <property type="project" value="GOC"/>
</dbReference>
<dbReference type="GO" id="GO:0003677">
    <property type="term" value="F:DNA binding"/>
    <property type="evidence" value="ECO:0007669"/>
    <property type="project" value="UniProtKB-UniRule"/>
</dbReference>
<dbReference type="GO" id="GO:0003899">
    <property type="term" value="F:DNA-directed RNA polymerase activity"/>
    <property type="evidence" value="ECO:0007669"/>
    <property type="project" value="UniProtKB-UniRule"/>
</dbReference>
<dbReference type="GO" id="GO:0000287">
    <property type="term" value="F:magnesium ion binding"/>
    <property type="evidence" value="ECO:0007669"/>
    <property type="project" value="UniProtKB-UniRule"/>
</dbReference>
<dbReference type="GO" id="GO:0008270">
    <property type="term" value="F:zinc ion binding"/>
    <property type="evidence" value="ECO:0007669"/>
    <property type="project" value="UniProtKB-UniRule"/>
</dbReference>
<dbReference type="GO" id="GO:0006351">
    <property type="term" value="P:DNA-templated transcription"/>
    <property type="evidence" value="ECO:0007669"/>
    <property type="project" value="UniProtKB-UniRule"/>
</dbReference>
<dbReference type="FunFam" id="4.10.860.120:FF:000007">
    <property type="entry name" value="DNA-directed RNA polymerase subunit gamma"/>
    <property type="match status" value="1"/>
</dbReference>
<dbReference type="Gene3D" id="1.10.40.90">
    <property type="match status" value="1"/>
</dbReference>
<dbReference type="Gene3D" id="2.40.40.20">
    <property type="match status" value="1"/>
</dbReference>
<dbReference type="Gene3D" id="4.10.860.120">
    <property type="entry name" value="RNA polymerase II, clamp domain"/>
    <property type="match status" value="1"/>
</dbReference>
<dbReference type="Gene3D" id="1.10.274.100">
    <property type="entry name" value="RNA polymerase Rpb1, domain 3"/>
    <property type="match status" value="1"/>
</dbReference>
<dbReference type="HAMAP" id="MF_01323">
    <property type="entry name" value="RNApol_bact_RpoC1"/>
    <property type="match status" value="1"/>
</dbReference>
<dbReference type="InterPro" id="IPR045867">
    <property type="entry name" value="DNA-dir_RpoC_beta_prime"/>
</dbReference>
<dbReference type="InterPro" id="IPR000722">
    <property type="entry name" value="RNA_pol_asu"/>
</dbReference>
<dbReference type="InterPro" id="IPR006592">
    <property type="entry name" value="RNA_pol_N"/>
</dbReference>
<dbReference type="InterPro" id="IPR007080">
    <property type="entry name" value="RNA_pol_Rpb1_1"/>
</dbReference>
<dbReference type="InterPro" id="IPR042102">
    <property type="entry name" value="RNA_pol_Rpb1_3_sf"/>
</dbReference>
<dbReference type="InterPro" id="IPR044893">
    <property type="entry name" value="RNA_pol_Rpb1_clamp_domain"/>
</dbReference>
<dbReference type="InterPro" id="IPR034678">
    <property type="entry name" value="RNApol_RpoC1"/>
</dbReference>
<dbReference type="PANTHER" id="PTHR19376">
    <property type="entry name" value="DNA-DIRECTED RNA POLYMERASE"/>
    <property type="match status" value="1"/>
</dbReference>
<dbReference type="PANTHER" id="PTHR19376:SF54">
    <property type="entry name" value="DNA-DIRECTED RNA POLYMERASE SUBUNIT BETA"/>
    <property type="match status" value="1"/>
</dbReference>
<dbReference type="Pfam" id="PF04997">
    <property type="entry name" value="RNA_pol_Rpb1_1"/>
    <property type="match status" value="1"/>
</dbReference>
<dbReference type="Pfam" id="PF00623">
    <property type="entry name" value="RNA_pol_Rpb1_2"/>
    <property type="match status" value="2"/>
</dbReference>
<dbReference type="SMART" id="SM00663">
    <property type="entry name" value="RPOLA_N"/>
    <property type="match status" value="1"/>
</dbReference>
<dbReference type="SUPFAM" id="SSF64484">
    <property type="entry name" value="beta and beta-prime subunits of DNA dependent RNA-polymerase"/>
    <property type="match status" value="1"/>
</dbReference>
<feature type="chain" id="PRO_0000353493" description="DNA-directed RNA polymerase subunit beta'">
    <location>
        <begin position="1"/>
        <end position="689"/>
    </location>
</feature>
<feature type="binding site" evidence="1">
    <location>
        <position position="76"/>
    </location>
    <ligand>
        <name>Zn(2+)</name>
        <dbReference type="ChEBI" id="CHEBI:29105"/>
    </ligand>
</feature>
<feature type="binding site" evidence="1">
    <location>
        <position position="78"/>
    </location>
    <ligand>
        <name>Zn(2+)</name>
        <dbReference type="ChEBI" id="CHEBI:29105"/>
    </ligand>
</feature>
<feature type="binding site" evidence="1">
    <location>
        <position position="94"/>
    </location>
    <ligand>
        <name>Zn(2+)</name>
        <dbReference type="ChEBI" id="CHEBI:29105"/>
    </ligand>
</feature>
<feature type="binding site" evidence="1">
    <location>
        <position position="97"/>
    </location>
    <ligand>
        <name>Zn(2+)</name>
        <dbReference type="ChEBI" id="CHEBI:29105"/>
    </ligand>
</feature>
<feature type="binding site" evidence="1">
    <location>
        <position position="496"/>
    </location>
    <ligand>
        <name>Mg(2+)</name>
        <dbReference type="ChEBI" id="CHEBI:18420"/>
    </ligand>
</feature>
<feature type="binding site" evidence="1">
    <location>
        <position position="498"/>
    </location>
    <ligand>
        <name>Mg(2+)</name>
        <dbReference type="ChEBI" id="CHEBI:18420"/>
    </ligand>
</feature>
<feature type="binding site" evidence="1">
    <location>
        <position position="500"/>
    </location>
    <ligand>
        <name>Mg(2+)</name>
        <dbReference type="ChEBI" id="CHEBI:18420"/>
    </ligand>
</feature>
<proteinExistence type="inferred from homology"/>
<comment type="function">
    <text evidence="1">DNA-dependent RNA polymerase catalyzes the transcription of DNA into RNA using the four ribonucleoside triphosphates as substrates.</text>
</comment>
<comment type="catalytic activity">
    <reaction evidence="1">
        <text>RNA(n) + a ribonucleoside 5'-triphosphate = RNA(n+1) + diphosphate</text>
        <dbReference type="Rhea" id="RHEA:21248"/>
        <dbReference type="Rhea" id="RHEA-COMP:14527"/>
        <dbReference type="Rhea" id="RHEA-COMP:17342"/>
        <dbReference type="ChEBI" id="CHEBI:33019"/>
        <dbReference type="ChEBI" id="CHEBI:61557"/>
        <dbReference type="ChEBI" id="CHEBI:140395"/>
        <dbReference type="EC" id="2.7.7.6"/>
    </reaction>
</comment>
<comment type="cofactor">
    <cofactor evidence="1">
        <name>Mg(2+)</name>
        <dbReference type="ChEBI" id="CHEBI:18420"/>
    </cofactor>
    <text evidence="1">Binds 1 Mg(2+) ion per subunit.</text>
</comment>
<comment type="cofactor">
    <cofactor evidence="1">
        <name>Zn(2+)</name>
        <dbReference type="ChEBI" id="CHEBI:29105"/>
    </cofactor>
    <text evidence="1">Binds 1 Zn(2+) ion per subunit.</text>
</comment>
<comment type="subunit">
    <text evidence="1">In plastids the minimal PEP RNA polymerase catalytic core is composed of four subunits: alpha, beta, beta', and beta''. When a (nuclear-encoded) sigma factor is associated with the core the holoenzyme is formed, which can initiate transcription.</text>
</comment>
<comment type="subcellular location">
    <subcellularLocation>
        <location evidence="1">Plastid</location>
        <location evidence="1">Chloroplast</location>
    </subcellularLocation>
</comment>
<comment type="similarity">
    <text evidence="1">Belongs to the RNA polymerase beta' chain family. RpoC1 subfamily.</text>
</comment>
<name>RPOC1_ILLOL</name>
<organism>
    <name type="scientific">Illicium oligandrum</name>
    <name type="common">Star anise</name>
    <dbReference type="NCBI Taxonomy" id="145286"/>
    <lineage>
        <taxon>Eukaryota</taxon>
        <taxon>Viridiplantae</taxon>
        <taxon>Streptophyta</taxon>
        <taxon>Embryophyta</taxon>
        <taxon>Tracheophyta</taxon>
        <taxon>Spermatophyta</taxon>
        <taxon>Magnoliopsida</taxon>
        <taxon>Austrobaileyales</taxon>
        <taxon>Schisandraceae</taxon>
        <taxon>Illicium</taxon>
    </lineage>
</organism>
<sequence>MNQNFSSMIDRYKYQQLRIGSVSPQQISAWANKILPNGEIVGEVTKPYTFHYKTNKPEKDGLFCERISGPIKSGICACGNYRVIGDEKEGPKFCEQCGVESVDSRIRRYQMGYIKLACPVTHVWYLKRLPSYIANLLDKPLKELEGLVYCDFSFARPIAKKPTFLRLRGSFEYEIQSRKYSIPLFFTTQGFDTFRNREISTGASAIREQLADPDLRIIMDRSLVEWKELGEEGSTGNAWEDRKIGRRKDFLVKRMELAKHFLRTNVEPERMVLCLLPVLPPELRPIIQIDGGKPMSSDINELYRRVIYRNNTLTDPLTTSRSTPGELVLCQEKLVQEAVDTLLDNGIRGQPMRDGHNKVYKSFSDVIEGKEGRFRETLLGKRVDYSGRSVIVVGPSLSLHRCGLPREIAIELFQTFVIRGLIRQRVASNIGIAKSKIREKEPIVWEILQEVMRGHPVLLNRAPTLHRLGIQAFQPIIGEGRAICLHPLVRKGFNADFDGDQMAVHVPLSLEAQTEARLLMFSHMNLLSPAIGDPISVPTQDMLIGLYVLTIGNHRGICANRYNPCNYRNYQNETVDDNNYQYTKEKEPHFCSSYDALGAYRQKRINLYSPLWLRWRLDQRVIASREVPIEVQYESLGTYHEIYGHYQIVRSIKKEILCIYIRTTIGHISFYREIEEAVQGFCRAYSYGT</sequence>